<dbReference type="EMBL" id="CP000577">
    <property type="protein sequence ID" value="ABN75490.1"/>
    <property type="molecule type" value="Genomic_DNA"/>
</dbReference>
<dbReference type="RefSeq" id="WP_002722514.1">
    <property type="nucleotide sequence ID" value="NC_009049.1"/>
</dbReference>
<dbReference type="SMR" id="A3PGM4"/>
<dbReference type="GeneID" id="67445513"/>
<dbReference type="KEGG" id="rsh:Rsph17029_0374"/>
<dbReference type="HOGENOM" id="CLU_139869_0_1_5"/>
<dbReference type="GO" id="GO:0005737">
    <property type="term" value="C:cytoplasm"/>
    <property type="evidence" value="ECO:0007669"/>
    <property type="project" value="UniProtKB-ARBA"/>
</dbReference>
<dbReference type="GO" id="GO:0015935">
    <property type="term" value="C:small ribosomal subunit"/>
    <property type="evidence" value="ECO:0007669"/>
    <property type="project" value="TreeGrafter"/>
</dbReference>
<dbReference type="GO" id="GO:0019843">
    <property type="term" value="F:rRNA binding"/>
    <property type="evidence" value="ECO:0007669"/>
    <property type="project" value="UniProtKB-UniRule"/>
</dbReference>
<dbReference type="GO" id="GO:0003735">
    <property type="term" value="F:structural constituent of ribosome"/>
    <property type="evidence" value="ECO:0007669"/>
    <property type="project" value="InterPro"/>
</dbReference>
<dbReference type="GO" id="GO:0006412">
    <property type="term" value="P:translation"/>
    <property type="evidence" value="ECO:0007669"/>
    <property type="project" value="UniProtKB-UniRule"/>
</dbReference>
<dbReference type="FunFam" id="1.10.287.1480:FF:000001">
    <property type="entry name" value="30S ribosomal protein S14"/>
    <property type="match status" value="1"/>
</dbReference>
<dbReference type="Gene3D" id="1.10.287.1480">
    <property type="match status" value="1"/>
</dbReference>
<dbReference type="HAMAP" id="MF_00537">
    <property type="entry name" value="Ribosomal_uS14_1"/>
    <property type="match status" value="1"/>
</dbReference>
<dbReference type="InterPro" id="IPR001209">
    <property type="entry name" value="Ribosomal_uS14"/>
</dbReference>
<dbReference type="InterPro" id="IPR023036">
    <property type="entry name" value="Ribosomal_uS14_bac/plastid"/>
</dbReference>
<dbReference type="InterPro" id="IPR018271">
    <property type="entry name" value="Ribosomal_uS14_CS"/>
</dbReference>
<dbReference type="NCBIfam" id="NF006477">
    <property type="entry name" value="PRK08881.1"/>
    <property type="match status" value="1"/>
</dbReference>
<dbReference type="PANTHER" id="PTHR19836">
    <property type="entry name" value="30S RIBOSOMAL PROTEIN S14"/>
    <property type="match status" value="1"/>
</dbReference>
<dbReference type="PANTHER" id="PTHR19836:SF19">
    <property type="entry name" value="SMALL RIBOSOMAL SUBUNIT PROTEIN US14M"/>
    <property type="match status" value="1"/>
</dbReference>
<dbReference type="Pfam" id="PF00253">
    <property type="entry name" value="Ribosomal_S14"/>
    <property type="match status" value="1"/>
</dbReference>
<dbReference type="SUPFAM" id="SSF57716">
    <property type="entry name" value="Glucocorticoid receptor-like (DNA-binding domain)"/>
    <property type="match status" value="1"/>
</dbReference>
<dbReference type="PROSITE" id="PS00527">
    <property type="entry name" value="RIBOSOMAL_S14"/>
    <property type="match status" value="1"/>
</dbReference>
<organism>
    <name type="scientific">Cereibacter sphaeroides (strain ATCC 17029 / ATH 2.4.9)</name>
    <name type="common">Rhodobacter sphaeroides</name>
    <dbReference type="NCBI Taxonomy" id="349101"/>
    <lineage>
        <taxon>Bacteria</taxon>
        <taxon>Pseudomonadati</taxon>
        <taxon>Pseudomonadota</taxon>
        <taxon>Alphaproteobacteria</taxon>
        <taxon>Rhodobacterales</taxon>
        <taxon>Paracoccaceae</taxon>
        <taxon>Cereibacter</taxon>
    </lineage>
</organism>
<accession>A3PGM4</accession>
<gene>
    <name evidence="1" type="primary">rpsN</name>
    <name type="ordered locus">Rsph17029_0374</name>
</gene>
<name>RS14_CERS1</name>
<feature type="chain" id="PRO_1000128543" description="Small ribosomal subunit protein uS14">
    <location>
        <begin position="1"/>
        <end position="101"/>
    </location>
</feature>
<sequence>MAKKSMIEREIKRAKMVQQYAAKRASLKEITTNADLPMEQRFKAQLKLAELPRNSSATRIHNRCQLTGRPHAYYRKLKLSRIMLRELASFGQIPGMVKSSW</sequence>
<comment type="function">
    <text evidence="1">Binds 16S rRNA, required for the assembly of 30S particles and may also be responsible for determining the conformation of the 16S rRNA at the A site.</text>
</comment>
<comment type="subunit">
    <text evidence="1">Part of the 30S ribosomal subunit. Contacts proteins S3 and S10.</text>
</comment>
<comment type="similarity">
    <text evidence="1">Belongs to the universal ribosomal protein uS14 family.</text>
</comment>
<protein>
    <recommendedName>
        <fullName evidence="1">Small ribosomal subunit protein uS14</fullName>
    </recommendedName>
    <alternativeName>
        <fullName evidence="2">30S ribosomal protein S14</fullName>
    </alternativeName>
</protein>
<reference key="1">
    <citation type="submission" date="2007-02" db="EMBL/GenBank/DDBJ databases">
        <title>Complete sequence of chromosome 1 of Rhodobacter sphaeroides ATCC 17029.</title>
        <authorList>
            <person name="Copeland A."/>
            <person name="Lucas S."/>
            <person name="Lapidus A."/>
            <person name="Barry K."/>
            <person name="Detter J.C."/>
            <person name="Glavina del Rio T."/>
            <person name="Hammon N."/>
            <person name="Israni S."/>
            <person name="Dalin E."/>
            <person name="Tice H."/>
            <person name="Pitluck S."/>
            <person name="Kiss H."/>
            <person name="Brettin T."/>
            <person name="Bruce D."/>
            <person name="Han C."/>
            <person name="Tapia R."/>
            <person name="Gilna P."/>
            <person name="Schmutz J."/>
            <person name="Larimer F."/>
            <person name="Land M."/>
            <person name="Hauser L."/>
            <person name="Kyrpides N."/>
            <person name="Mikhailova N."/>
            <person name="Richardson P."/>
            <person name="Mackenzie C."/>
            <person name="Choudhary M."/>
            <person name="Donohue T.J."/>
            <person name="Kaplan S."/>
        </authorList>
    </citation>
    <scope>NUCLEOTIDE SEQUENCE [LARGE SCALE GENOMIC DNA]</scope>
    <source>
        <strain>ATCC 17029 / ATH 2.4.9</strain>
    </source>
</reference>
<evidence type="ECO:0000255" key="1">
    <source>
        <dbReference type="HAMAP-Rule" id="MF_00537"/>
    </source>
</evidence>
<evidence type="ECO:0000305" key="2"/>
<keyword id="KW-0687">Ribonucleoprotein</keyword>
<keyword id="KW-0689">Ribosomal protein</keyword>
<keyword id="KW-0694">RNA-binding</keyword>
<keyword id="KW-0699">rRNA-binding</keyword>
<proteinExistence type="inferred from homology"/>